<feature type="chain" id="PRO_1000120933" description="Large ribosomal subunit protein uL10">
    <location>
        <begin position="1"/>
        <end position="167"/>
    </location>
</feature>
<accession>B2T761</accession>
<evidence type="ECO:0000255" key="1">
    <source>
        <dbReference type="HAMAP-Rule" id="MF_00362"/>
    </source>
</evidence>
<evidence type="ECO:0000305" key="2"/>
<keyword id="KW-0687">Ribonucleoprotein</keyword>
<keyword id="KW-0689">Ribosomal protein</keyword>
<keyword id="KW-0694">RNA-binding</keyword>
<keyword id="KW-0699">rRNA-binding</keyword>
<reference key="1">
    <citation type="journal article" date="2011" name="J. Bacteriol.">
        <title>Complete genome sequence of the plant growth-promoting endophyte Burkholderia phytofirmans strain PsJN.</title>
        <authorList>
            <person name="Weilharter A."/>
            <person name="Mitter B."/>
            <person name="Shin M.V."/>
            <person name="Chain P.S."/>
            <person name="Nowak J."/>
            <person name="Sessitsch A."/>
        </authorList>
    </citation>
    <scope>NUCLEOTIDE SEQUENCE [LARGE SCALE GENOMIC DNA]</scope>
    <source>
        <strain>DSM 17436 / LMG 22146 / PsJN</strain>
    </source>
</reference>
<sequence length="167" mass="17825">MPLNKESKQAVVAEVAAQVAKAQTVVLAEYRGIAVGDLTKLRAKAREQQVYLRVLKNTLARRAVEGTPFAPLAEQMTGPLIYGISEDAIAAAKVVNDFGKTNDKLIIKAGSYEGKVMDKAGVQALANIPSREELLSKLLYVMQAPVSGFARALAALAEKKQGEETAA</sequence>
<proteinExistence type="inferred from homology"/>
<name>RL10_PARPJ</name>
<dbReference type="EMBL" id="CP001052">
    <property type="protein sequence ID" value="ACD18044.1"/>
    <property type="molecule type" value="Genomic_DNA"/>
</dbReference>
<dbReference type="RefSeq" id="WP_007180144.1">
    <property type="nucleotide sequence ID" value="NC_010681.1"/>
</dbReference>
<dbReference type="SMR" id="B2T761"/>
<dbReference type="STRING" id="398527.Bphyt_3654"/>
<dbReference type="GeneID" id="97311155"/>
<dbReference type="KEGG" id="bpy:Bphyt_3654"/>
<dbReference type="eggNOG" id="COG0244">
    <property type="taxonomic scope" value="Bacteria"/>
</dbReference>
<dbReference type="HOGENOM" id="CLU_092227_0_1_4"/>
<dbReference type="OrthoDB" id="9808307at2"/>
<dbReference type="Proteomes" id="UP000001739">
    <property type="component" value="Chromosome 1"/>
</dbReference>
<dbReference type="GO" id="GO:1990904">
    <property type="term" value="C:ribonucleoprotein complex"/>
    <property type="evidence" value="ECO:0007669"/>
    <property type="project" value="UniProtKB-KW"/>
</dbReference>
<dbReference type="GO" id="GO:0005840">
    <property type="term" value="C:ribosome"/>
    <property type="evidence" value="ECO:0007669"/>
    <property type="project" value="UniProtKB-KW"/>
</dbReference>
<dbReference type="GO" id="GO:0070180">
    <property type="term" value="F:large ribosomal subunit rRNA binding"/>
    <property type="evidence" value="ECO:0007669"/>
    <property type="project" value="UniProtKB-UniRule"/>
</dbReference>
<dbReference type="GO" id="GO:0006412">
    <property type="term" value="P:translation"/>
    <property type="evidence" value="ECO:0007669"/>
    <property type="project" value="UniProtKB-UniRule"/>
</dbReference>
<dbReference type="CDD" id="cd05797">
    <property type="entry name" value="Ribosomal_L10"/>
    <property type="match status" value="1"/>
</dbReference>
<dbReference type="Gene3D" id="3.30.70.1730">
    <property type="match status" value="1"/>
</dbReference>
<dbReference type="Gene3D" id="6.10.250.290">
    <property type="match status" value="1"/>
</dbReference>
<dbReference type="HAMAP" id="MF_00362">
    <property type="entry name" value="Ribosomal_uL10"/>
    <property type="match status" value="1"/>
</dbReference>
<dbReference type="InterPro" id="IPR001790">
    <property type="entry name" value="Ribosomal_uL10"/>
</dbReference>
<dbReference type="InterPro" id="IPR043141">
    <property type="entry name" value="Ribosomal_uL10-like_sf"/>
</dbReference>
<dbReference type="InterPro" id="IPR022973">
    <property type="entry name" value="Ribosomal_uL10_bac"/>
</dbReference>
<dbReference type="InterPro" id="IPR047865">
    <property type="entry name" value="Ribosomal_uL10_bac_type"/>
</dbReference>
<dbReference type="NCBIfam" id="NF000955">
    <property type="entry name" value="PRK00099.1-1"/>
    <property type="match status" value="1"/>
</dbReference>
<dbReference type="PANTHER" id="PTHR11560">
    <property type="entry name" value="39S RIBOSOMAL PROTEIN L10, MITOCHONDRIAL"/>
    <property type="match status" value="1"/>
</dbReference>
<dbReference type="Pfam" id="PF00466">
    <property type="entry name" value="Ribosomal_L10"/>
    <property type="match status" value="1"/>
</dbReference>
<dbReference type="SUPFAM" id="SSF160369">
    <property type="entry name" value="Ribosomal protein L10-like"/>
    <property type="match status" value="1"/>
</dbReference>
<protein>
    <recommendedName>
        <fullName evidence="1">Large ribosomal subunit protein uL10</fullName>
    </recommendedName>
    <alternativeName>
        <fullName evidence="2">50S ribosomal protein L10</fullName>
    </alternativeName>
</protein>
<organism>
    <name type="scientific">Paraburkholderia phytofirmans (strain DSM 17436 / LMG 22146 / PsJN)</name>
    <name type="common">Burkholderia phytofirmans</name>
    <dbReference type="NCBI Taxonomy" id="398527"/>
    <lineage>
        <taxon>Bacteria</taxon>
        <taxon>Pseudomonadati</taxon>
        <taxon>Pseudomonadota</taxon>
        <taxon>Betaproteobacteria</taxon>
        <taxon>Burkholderiales</taxon>
        <taxon>Burkholderiaceae</taxon>
        <taxon>Paraburkholderia</taxon>
    </lineage>
</organism>
<comment type="function">
    <text evidence="1">Forms part of the ribosomal stalk, playing a central role in the interaction of the ribosome with GTP-bound translation factors.</text>
</comment>
<comment type="subunit">
    <text evidence="1">Part of the ribosomal stalk of the 50S ribosomal subunit. The N-terminus interacts with L11 and the large rRNA to form the base of the stalk. The C-terminus forms an elongated spine to which L12 dimers bind in a sequential fashion forming a multimeric L10(L12)X complex.</text>
</comment>
<comment type="similarity">
    <text evidence="1">Belongs to the universal ribosomal protein uL10 family.</text>
</comment>
<gene>
    <name evidence="1" type="primary">rplJ</name>
    <name type="ordered locus">Bphyt_3654</name>
</gene>